<keyword id="KW-0002">3D-structure</keyword>
<keyword id="KW-0025">Alternative splicing</keyword>
<keyword id="KW-0175">Coiled coil</keyword>
<keyword id="KW-0963">Cytoplasm</keyword>
<keyword id="KW-0539">Nucleus</keyword>
<keyword id="KW-0597">Phosphoprotein</keyword>
<keyword id="KW-1267">Proteomics identification</keyword>
<keyword id="KW-1185">Reference proteome</keyword>
<comment type="function">
    <text evidence="4 5 6 7">Component of several N-terminal acetyltransferase complexes (PubMed:20154145, PubMed:29754825, PubMed:32042062). Inhibits the N-terminal acetylation activity of the N-terminal acetyltransferase NAA10-NAA15 complex (also called the NatA complex) (PubMed:29754825, PubMed:32042062). Has chaperone-like activity preventing polyglutamine (polyQ) aggregation of HTT in neuronal cells probably while associated with the NatA complex (PubMed:17947297, PubMed:20154145). May play a role in the NatA complex-mediated N-terminal acetylation of PCNP (PubMed:20154145).</text>
</comment>
<comment type="subunit">
    <text evidence="4 5 6 7">Component of the N-terminal acetyltransferase A (NatA)/HYPK complex at least composed of NAA10, NAA15 and HYPK, which has N-terminal acetyltransferase activity (PubMed:20154145, PubMed:29754825, PubMed:32042062). Within the complex interacts with NAA10 (PubMed:29754825, PubMed:32042062). Within the complex interacts with NAA15 (PubMed:20154145, PubMed:29754825, PubMed:32042062). Predominantly interacts with NAA15 in the NAA10-NAA15 complex (also called the NatA complex); the interaction with the NatA complex reduces the acetylation activity of the NatA complex (PubMed:29754825, PubMed:32042062). Interacts with HTT (via N-terminus) (PubMed:17947297). The NatA complex is required for HYPK stability and for reducing polyQ aggregation of HTT (PubMed:20154145, PubMed:29754825, PubMed:32042062). Component of the N-terminal acetyltransferase E (NatE)/HYPK complex at least composed of NAA10, NAA15, NAA50 and HYPK (PubMed:32042062). Within the complex interacts with NAA10 and NAA15 (PubMed:32042062). Does not interact with NAA50 (PubMed:29754825, PubMed:32042062). Interaction with NAA15 reduces the capacity of NAA15 to interact with NAA50 (PubMed:29754825, PubMed:32042062). Its capacity to interact with the NatA complex is reduced by NAA50 (PubMed:32042062). Does not interact with the N-terminal acetyltransferase B (NatB) complex component NAA25 or the N-terminal acetyltransferase C (NatC) complex component NAA35 (PubMed:20154145).</text>
</comment>
<comment type="interaction">
    <interactant intactId="EBI-1048743">
        <id>Q9NX55</id>
    </interactant>
    <interactant intactId="EBI-11603468">
        <id>Q2NKX9</id>
        <label>C2orf68</label>
    </interactant>
    <organismsDiffer>false</organismsDiffer>
    <experiments>5</experiments>
</comment>
<comment type="interaction">
    <interactant intactId="EBI-1048743">
        <id>Q9NX55</id>
    </interactant>
    <interactant intactId="EBI-466029">
        <id>P42858</id>
        <label>HTT</label>
    </interactant>
    <organismsDiffer>false</organismsDiffer>
    <experiments>4</experiments>
</comment>
<comment type="interaction">
    <interactant intactId="EBI-1048743">
        <id>Q9NX55</id>
    </interactant>
    <interactant intactId="EBI-740978">
        <id>P43355</id>
        <label>MAGEA1</label>
    </interactant>
    <organismsDiffer>false</organismsDiffer>
    <experiments>3</experiments>
</comment>
<comment type="interaction">
    <interactant intactId="EBI-1048743">
        <id>Q9NX55</id>
    </interactant>
    <interactant intactId="EBI-1042540">
        <id>Q9BXJ9</id>
        <label>NAA15</label>
    </interactant>
    <organismsDiffer>false</organismsDiffer>
    <experiments>7</experiments>
</comment>
<comment type="interaction">
    <interactant intactId="EBI-1048743">
        <id>Q9NX55</id>
    </interactant>
    <interactant intactId="EBI-359793">
        <id>P40222</id>
        <label>TXLNA</label>
    </interactant>
    <organismsDiffer>false</organismsDiffer>
    <experiments>6</experiments>
</comment>
<comment type="subcellular location">
    <subcellularLocation>
        <location evidence="5">Nucleus</location>
    </subcellularLocation>
    <subcellularLocation>
        <location evidence="5">Cytoplasm</location>
    </subcellularLocation>
    <text evidence="5">Within the NatA/HYPK complex, may localize to ribosomes.</text>
</comment>
<comment type="alternative products">
    <event type="alternative splicing"/>
    <isoform>
        <id>Q9NX55-2</id>
        <name>2</name>
        <sequence type="displayed"/>
    </isoform>
    <isoform>
        <id>Q9NX55-3</id>
        <name>3</name>
        <sequence type="described" ref="VSP_040677 VSP_040678"/>
    </isoform>
</comment>
<comment type="sequence caution" evidence="9">
    <conflict type="erroneous initiation">
        <sequence resource="EMBL-CDS" id="AAH19262"/>
    </conflict>
    <text>Extended N-terminus.</text>
</comment>
<comment type="sequence caution" evidence="9">
    <conflict type="miscellaneous discrepancy">
        <sequence resource="EMBL-CDS" id="BAA91165"/>
    </conflict>
    <text>Readthrough transcript SERF2-HYPK/C15orf63.</text>
</comment>
<dbReference type="EMBL" id="AF161485">
    <property type="protein sequence ID" value="AAF29100.1"/>
    <property type="molecule type" value="mRNA"/>
</dbReference>
<dbReference type="EMBL" id="AK000438">
    <property type="protein sequence ID" value="BAA91165.1"/>
    <property type="status" value="ALT_SEQ"/>
    <property type="molecule type" value="mRNA"/>
</dbReference>
<dbReference type="EMBL" id="AK022435">
    <property type="status" value="NOT_ANNOTATED_CDS"/>
    <property type="molecule type" value="mRNA"/>
</dbReference>
<dbReference type="EMBL" id="AC018512">
    <property type="status" value="NOT_ANNOTATED_CDS"/>
    <property type="molecule type" value="Genomic_DNA"/>
</dbReference>
<dbReference type="EMBL" id="BC019262">
    <property type="protein sequence ID" value="AAH19262.2"/>
    <property type="status" value="ALT_INIT"/>
    <property type="molecule type" value="mRNA"/>
</dbReference>
<dbReference type="EMBL" id="AF049613">
    <property type="protein sequence ID" value="AAC26849.1"/>
    <property type="molecule type" value="mRNA"/>
</dbReference>
<dbReference type="CCDS" id="CCDS10104.2">
    <molecule id="Q9NX55-2"/>
</dbReference>
<dbReference type="RefSeq" id="NP_001186814.1">
    <property type="nucleotide sequence ID" value="NM_001199885.1"/>
</dbReference>
<dbReference type="RefSeq" id="NP_057484.3">
    <molecule id="Q9NX55-2"/>
    <property type="nucleotide sequence ID" value="NM_016400.3"/>
</dbReference>
<dbReference type="PDB" id="6C95">
    <property type="method" value="X-ray"/>
    <property type="resolution" value="3.15 A"/>
    <property type="chains" value="D=27-121"/>
</dbReference>
<dbReference type="PDB" id="6PW9">
    <property type="method" value="EM"/>
    <property type="resolution" value="4.03 A"/>
    <property type="chains" value="D=1-121"/>
</dbReference>
<dbReference type="PDB" id="9F1D">
    <property type="method" value="EM"/>
    <property type="resolution" value="3.26 A"/>
    <property type="chains" value="DD=1-121"/>
</dbReference>
<dbReference type="PDBsum" id="6C95"/>
<dbReference type="PDBsum" id="6PW9"/>
<dbReference type="PDBsum" id="9F1D"/>
<dbReference type="EMDB" id="EMD-20501"/>
<dbReference type="EMDB" id="EMD-50126"/>
<dbReference type="SMR" id="Q9NX55"/>
<dbReference type="BioGRID" id="117304">
    <property type="interactions" value="123"/>
</dbReference>
<dbReference type="CORUM" id="Q9NX55"/>
<dbReference type="FunCoup" id="Q9NX55">
    <property type="interactions" value="2061"/>
</dbReference>
<dbReference type="IntAct" id="Q9NX55">
    <property type="interactions" value="25"/>
</dbReference>
<dbReference type="MINT" id="Q9NX55"/>
<dbReference type="STRING" id="9606.ENSP00000384474"/>
<dbReference type="iPTMnet" id="Q9NX55"/>
<dbReference type="MetOSite" id="Q9NX55"/>
<dbReference type="PhosphoSitePlus" id="Q9NX55"/>
<dbReference type="BioMuta" id="HYPK"/>
<dbReference type="DMDM" id="325511335"/>
<dbReference type="jPOST" id="Q9NX55"/>
<dbReference type="MassIVE" id="Q9NX55"/>
<dbReference type="PaxDb" id="9606-ENSP00000384474"/>
<dbReference type="PeptideAtlas" id="Q9NX55"/>
<dbReference type="ProteomicsDB" id="83042">
    <molecule id="Q9NX55-2"/>
</dbReference>
<dbReference type="ProteomicsDB" id="83043">
    <molecule id="Q9NX55-3"/>
</dbReference>
<dbReference type="Pumba" id="Q9NX55"/>
<dbReference type="TopDownProteomics" id="Q9NX55-2">
    <molecule id="Q9NX55-2"/>
</dbReference>
<dbReference type="Antibodypedia" id="65071">
    <property type="antibodies" value="7 antibodies from 5 providers"/>
</dbReference>
<dbReference type="DNASU" id="25764"/>
<dbReference type="Ensembl" id="ENST00000406925.7">
    <molecule id="Q9NX55-2"/>
    <property type="protein sequence ID" value="ENSP00000384474.2"/>
    <property type="gene ID" value="ENSG00000242028.9"/>
</dbReference>
<dbReference type="Ensembl" id="ENST00000442995.4">
    <molecule id="Q9NX55-2"/>
    <property type="protein sequence ID" value="ENSP00000401155.3"/>
    <property type="gene ID" value="ENSG00000242028.9"/>
</dbReference>
<dbReference type="GeneID" id="25764"/>
<dbReference type="KEGG" id="hsa:25764"/>
<dbReference type="MANE-Select" id="ENST00000442995.4">
    <property type="protein sequence ID" value="ENSP00000401155.3"/>
    <property type="RefSeq nucleotide sequence ID" value="NM_016400.4"/>
    <property type="RefSeq protein sequence ID" value="NP_057484.4"/>
</dbReference>
<dbReference type="UCSC" id="uc059inn.1">
    <molecule id="Q9NX55-2"/>
    <property type="organism name" value="human"/>
</dbReference>
<dbReference type="AGR" id="HGNC:18418"/>
<dbReference type="CTD" id="25764"/>
<dbReference type="DisGeNET" id="25764"/>
<dbReference type="GeneCards" id="HYPK"/>
<dbReference type="HGNC" id="HGNC:18418">
    <property type="gene designation" value="HYPK"/>
</dbReference>
<dbReference type="HPA" id="ENSG00000242028">
    <property type="expression patterns" value="Low tissue specificity"/>
</dbReference>
<dbReference type="MIM" id="612784">
    <property type="type" value="gene"/>
</dbReference>
<dbReference type="neXtProt" id="NX_Q9NX55"/>
<dbReference type="OpenTargets" id="ENSG00000242028"/>
<dbReference type="PharmGKB" id="PA165478509"/>
<dbReference type="VEuPathDB" id="HostDB:ENSG00000242028"/>
<dbReference type="eggNOG" id="KOG3450">
    <property type="taxonomic scope" value="Eukaryota"/>
</dbReference>
<dbReference type="GeneTree" id="ENSGT00390000008502"/>
<dbReference type="HOGENOM" id="CLU_128817_1_1_1"/>
<dbReference type="InParanoid" id="Q9NX55"/>
<dbReference type="OMA" id="IIGDRRN"/>
<dbReference type="OrthoDB" id="285219at2759"/>
<dbReference type="PAN-GO" id="Q9NX55">
    <property type="GO annotations" value="2 GO annotations based on evolutionary models"/>
</dbReference>
<dbReference type="PhylomeDB" id="Q9NX55"/>
<dbReference type="TreeFam" id="TF325606"/>
<dbReference type="PathwayCommons" id="Q9NX55"/>
<dbReference type="SABIO-RK" id="Q9NX55"/>
<dbReference type="SignaLink" id="Q9NX55"/>
<dbReference type="BioGRID-ORCS" id="25764">
    <property type="hits" value="712 hits in 1167 CRISPR screens"/>
</dbReference>
<dbReference type="GenomeRNAi" id="25764"/>
<dbReference type="Pharos" id="Q9NX55">
    <property type="development level" value="Tbio"/>
</dbReference>
<dbReference type="PRO" id="PR:Q9NX55"/>
<dbReference type="Proteomes" id="UP000005640">
    <property type="component" value="Chromosome 15"/>
</dbReference>
<dbReference type="RNAct" id="Q9NX55">
    <property type="molecule type" value="protein"/>
</dbReference>
<dbReference type="Bgee" id="ENSG00000242028">
    <property type="expression patterns" value="Expressed in hindlimb stylopod muscle and 96 other cell types or tissues"/>
</dbReference>
<dbReference type="ExpressionAtlas" id="Q9NX55">
    <property type="expression patterns" value="baseline and differential"/>
</dbReference>
<dbReference type="GO" id="GO:0005737">
    <property type="term" value="C:cytoplasm"/>
    <property type="evidence" value="ECO:0000314"/>
    <property type="project" value="CAFA"/>
</dbReference>
<dbReference type="GO" id="GO:0015630">
    <property type="term" value="C:microtubule cytoskeleton"/>
    <property type="evidence" value="ECO:0000314"/>
    <property type="project" value="HPA"/>
</dbReference>
<dbReference type="GO" id="GO:0005654">
    <property type="term" value="C:nucleoplasm"/>
    <property type="evidence" value="ECO:0000314"/>
    <property type="project" value="HPA"/>
</dbReference>
<dbReference type="GO" id="GO:0005634">
    <property type="term" value="C:nucleus"/>
    <property type="evidence" value="ECO:0000314"/>
    <property type="project" value="CAFA"/>
</dbReference>
<dbReference type="GO" id="GO:0032991">
    <property type="term" value="C:protein-containing complex"/>
    <property type="evidence" value="ECO:0000314"/>
    <property type="project" value="CAFA"/>
</dbReference>
<dbReference type="GO" id="GO:0044183">
    <property type="term" value="F:protein folding chaperone"/>
    <property type="evidence" value="ECO:0000314"/>
    <property type="project" value="DisProt"/>
</dbReference>
<dbReference type="GO" id="GO:0043066">
    <property type="term" value="P:negative regulation of apoptotic process"/>
    <property type="evidence" value="ECO:0000314"/>
    <property type="project" value="CAFA"/>
</dbReference>
<dbReference type="GO" id="GO:0050821">
    <property type="term" value="P:protein stabilization"/>
    <property type="evidence" value="ECO:0000314"/>
    <property type="project" value="CAFA"/>
</dbReference>
<dbReference type="CDD" id="cd14361">
    <property type="entry name" value="UBA_HYPK"/>
    <property type="match status" value="1"/>
</dbReference>
<dbReference type="DisProt" id="DP00546"/>
<dbReference type="FunFam" id="1.10.8.10:FF:000052">
    <property type="entry name" value="Huntingtin-interacting protein K (Predicted)"/>
    <property type="match status" value="1"/>
</dbReference>
<dbReference type="Gene3D" id="1.10.8.10">
    <property type="entry name" value="DNA helicase RuvA subunit, C-terminal domain"/>
    <property type="match status" value="1"/>
</dbReference>
<dbReference type="InterPro" id="IPR052617">
    <property type="entry name" value="Huntingtin-int_K"/>
</dbReference>
<dbReference type="InterPro" id="IPR038922">
    <property type="entry name" value="HYPK_UBA"/>
</dbReference>
<dbReference type="InterPro" id="IPR044034">
    <property type="entry name" value="NAC-like_UBA"/>
</dbReference>
<dbReference type="PANTHER" id="PTHR31184:SF2">
    <property type="entry name" value="HUNTINGTIN-INTERACTING PROTEIN K"/>
    <property type="match status" value="1"/>
</dbReference>
<dbReference type="PANTHER" id="PTHR31184">
    <property type="entry name" value="HUNTINGTIN-INTERACTING PROTEIN K FAMILY MEMBER"/>
    <property type="match status" value="1"/>
</dbReference>
<dbReference type="Pfam" id="PF19026">
    <property type="entry name" value="UBA_HYPK"/>
    <property type="match status" value="1"/>
</dbReference>
<evidence type="ECO:0000255" key="1"/>
<evidence type="ECO:0000256" key="2">
    <source>
        <dbReference type="SAM" id="MobiDB-lite"/>
    </source>
</evidence>
<evidence type="ECO:0000269" key="3">
    <source>
    </source>
</evidence>
<evidence type="ECO:0000269" key="4">
    <source>
    </source>
</evidence>
<evidence type="ECO:0000269" key="5">
    <source>
    </source>
</evidence>
<evidence type="ECO:0000269" key="6">
    <source>
    </source>
</evidence>
<evidence type="ECO:0000269" key="7">
    <source>
    </source>
</evidence>
<evidence type="ECO:0000303" key="8">
    <source>
    </source>
</evidence>
<evidence type="ECO:0000305" key="9"/>
<evidence type="ECO:0000312" key="10">
    <source>
        <dbReference type="HGNC" id="HGNC:18418"/>
    </source>
</evidence>
<evidence type="ECO:0007744" key="11">
    <source>
        <dbReference type="PDB" id="6C95"/>
    </source>
</evidence>
<evidence type="ECO:0007744" key="12">
    <source>
    </source>
</evidence>
<evidence type="ECO:0007829" key="13">
    <source>
        <dbReference type="PDB" id="6C95"/>
    </source>
</evidence>
<reference key="1">
    <citation type="journal article" date="2000" name="Genome Res.">
        <title>Cloning and functional analysis of cDNAs with open reading frames for 300 previously undefined genes expressed in CD34+ hematopoietic stem/progenitor cells.</title>
        <authorList>
            <person name="Zhang Q.-H."/>
            <person name="Ye M."/>
            <person name="Wu X.-Y."/>
            <person name="Ren S.-X."/>
            <person name="Zhao M."/>
            <person name="Zhao C.-J."/>
            <person name="Fu G."/>
            <person name="Shen Y."/>
            <person name="Fan H.-Y."/>
            <person name="Lu G."/>
            <person name="Zhong M."/>
            <person name="Xu X.-R."/>
            <person name="Han Z.-G."/>
            <person name="Zhang J.-W."/>
            <person name="Tao J."/>
            <person name="Huang Q.-H."/>
            <person name="Zhou J."/>
            <person name="Hu G.-X."/>
            <person name="Gu J."/>
            <person name="Chen S.-J."/>
            <person name="Chen Z."/>
        </authorList>
    </citation>
    <scope>NUCLEOTIDE SEQUENCE [LARGE SCALE MRNA] (ISOFORM 2)</scope>
    <scope>VARIANT PRO-97</scope>
    <source>
        <tissue>Umbilical cord blood</tissue>
    </source>
</reference>
<reference key="2">
    <citation type="journal article" date="2004" name="Nat. Genet.">
        <title>Complete sequencing and characterization of 21,243 full-length human cDNAs.</title>
        <authorList>
            <person name="Ota T."/>
            <person name="Suzuki Y."/>
            <person name="Nishikawa T."/>
            <person name="Otsuki T."/>
            <person name="Sugiyama T."/>
            <person name="Irie R."/>
            <person name="Wakamatsu A."/>
            <person name="Hayashi K."/>
            <person name="Sato H."/>
            <person name="Nagai K."/>
            <person name="Kimura K."/>
            <person name="Makita H."/>
            <person name="Sekine M."/>
            <person name="Obayashi M."/>
            <person name="Nishi T."/>
            <person name="Shibahara T."/>
            <person name="Tanaka T."/>
            <person name="Ishii S."/>
            <person name="Yamamoto J."/>
            <person name="Saito K."/>
            <person name="Kawai Y."/>
            <person name="Isono Y."/>
            <person name="Nakamura Y."/>
            <person name="Nagahari K."/>
            <person name="Murakami K."/>
            <person name="Yasuda T."/>
            <person name="Iwayanagi T."/>
            <person name="Wagatsuma M."/>
            <person name="Shiratori A."/>
            <person name="Sudo H."/>
            <person name="Hosoiri T."/>
            <person name="Kaku Y."/>
            <person name="Kodaira H."/>
            <person name="Kondo H."/>
            <person name="Sugawara M."/>
            <person name="Takahashi M."/>
            <person name="Kanda K."/>
            <person name="Yokoi T."/>
            <person name="Furuya T."/>
            <person name="Kikkawa E."/>
            <person name="Omura Y."/>
            <person name="Abe K."/>
            <person name="Kamihara K."/>
            <person name="Katsuta N."/>
            <person name="Sato K."/>
            <person name="Tanikawa M."/>
            <person name="Yamazaki M."/>
            <person name="Ninomiya K."/>
            <person name="Ishibashi T."/>
            <person name="Yamashita H."/>
            <person name="Murakawa K."/>
            <person name="Fujimori K."/>
            <person name="Tanai H."/>
            <person name="Kimata M."/>
            <person name="Watanabe M."/>
            <person name="Hiraoka S."/>
            <person name="Chiba Y."/>
            <person name="Ishida S."/>
            <person name="Ono Y."/>
            <person name="Takiguchi S."/>
            <person name="Watanabe S."/>
            <person name="Yosida M."/>
            <person name="Hotuta T."/>
            <person name="Kusano J."/>
            <person name="Kanehori K."/>
            <person name="Takahashi-Fujii A."/>
            <person name="Hara H."/>
            <person name="Tanase T.-O."/>
            <person name="Nomura Y."/>
            <person name="Togiya S."/>
            <person name="Komai F."/>
            <person name="Hara R."/>
            <person name="Takeuchi K."/>
            <person name="Arita M."/>
            <person name="Imose N."/>
            <person name="Musashino K."/>
            <person name="Yuuki H."/>
            <person name="Oshima A."/>
            <person name="Sasaki N."/>
            <person name="Aotsuka S."/>
            <person name="Yoshikawa Y."/>
            <person name="Matsunawa H."/>
            <person name="Ichihara T."/>
            <person name="Shiohata N."/>
            <person name="Sano S."/>
            <person name="Moriya S."/>
            <person name="Momiyama H."/>
            <person name="Satoh N."/>
            <person name="Takami S."/>
            <person name="Terashima Y."/>
            <person name="Suzuki O."/>
            <person name="Nakagawa S."/>
            <person name="Senoh A."/>
            <person name="Mizoguchi H."/>
            <person name="Goto Y."/>
            <person name="Shimizu F."/>
            <person name="Wakebe H."/>
            <person name="Hishigaki H."/>
            <person name="Watanabe T."/>
            <person name="Sugiyama A."/>
            <person name="Takemoto M."/>
            <person name="Kawakami B."/>
            <person name="Yamazaki M."/>
            <person name="Watanabe K."/>
            <person name="Kumagai A."/>
            <person name="Itakura S."/>
            <person name="Fukuzumi Y."/>
            <person name="Fujimori Y."/>
            <person name="Komiyama M."/>
            <person name="Tashiro H."/>
            <person name="Tanigami A."/>
            <person name="Fujiwara T."/>
            <person name="Ono T."/>
            <person name="Yamada K."/>
            <person name="Fujii Y."/>
            <person name="Ozaki K."/>
            <person name="Hirao M."/>
            <person name="Ohmori Y."/>
            <person name="Kawabata A."/>
            <person name="Hikiji T."/>
            <person name="Kobatake N."/>
            <person name="Inagaki H."/>
            <person name="Ikema Y."/>
            <person name="Okamoto S."/>
            <person name="Okitani R."/>
            <person name="Kawakami T."/>
            <person name="Noguchi S."/>
            <person name="Itoh T."/>
            <person name="Shigeta K."/>
            <person name="Senba T."/>
            <person name="Matsumura K."/>
            <person name="Nakajima Y."/>
            <person name="Mizuno T."/>
            <person name="Morinaga M."/>
            <person name="Sasaki M."/>
            <person name="Togashi T."/>
            <person name="Oyama M."/>
            <person name="Hata H."/>
            <person name="Watanabe M."/>
            <person name="Komatsu T."/>
            <person name="Mizushima-Sugano J."/>
            <person name="Satoh T."/>
            <person name="Shirai Y."/>
            <person name="Takahashi Y."/>
            <person name="Nakagawa K."/>
            <person name="Okumura K."/>
            <person name="Nagase T."/>
            <person name="Nomura N."/>
            <person name="Kikuchi H."/>
            <person name="Masuho Y."/>
            <person name="Yamashita R."/>
            <person name="Nakai K."/>
            <person name="Yada T."/>
            <person name="Nakamura Y."/>
            <person name="Ohara O."/>
            <person name="Isogai T."/>
            <person name="Sugano S."/>
        </authorList>
    </citation>
    <scope>NUCLEOTIDE SEQUENCE [LARGE SCALE MRNA] (ISOFORM 3)</scope>
</reference>
<reference key="3">
    <citation type="journal article" date="2006" name="Nature">
        <title>Analysis of the DNA sequence and duplication history of human chromosome 15.</title>
        <authorList>
            <person name="Zody M.C."/>
            <person name="Garber M."/>
            <person name="Sharpe T."/>
            <person name="Young S.K."/>
            <person name="Rowen L."/>
            <person name="O'Neill K."/>
            <person name="Whittaker C.A."/>
            <person name="Kamal M."/>
            <person name="Chang J.L."/>
            <person name="Cuomo C.A."/>
            <person name="Dewar K."/>
            <person name="FitzGerald M.G."/>
            <person name="Kodira C.D."/>
            <person name="Madan A."/>
            <person name="Qin S."/>
            <person name="Yang X."/>
            <person name="Abbasi N."/>
            <person name="Abouelleil A."/>
            <person name="Arachchi H.M."/>
            <person name="Baradarani L."/>
            <person name="Birditt B."/>
            <person name="Bloom S."/>
            <person name="Bloom T."/>
            <person name="Borowsky M.L."/>
            <person name="Burke J."/>
            <person name="Butler J."/>
            <person name="Cook A."/>
            <person name="DeArellano K."/>
            <person name="DeCaprio D."/>
            <person name="Dorris L. III"/>
            <person name="Dors M."/>
            <person name="Eichler E.E."/>
            <person name="Engels R."/>
            <person name="Fahey J."/>
            <person name="Fleetwood P."/>
            <person name="Friedman C."/>
            <person name="Gearin G."/>
            <person name="Hall J.L."/>
            <person name="Hensley G."/>
            <person name="Johnson E."/>
            <person name="Jones C."/>
            <person name="Kamat A."/>
            <person name="Kaur A."/>
            <person name="Locke D.P."/>
            <person name="Madan A."/>
            <person name="Munson G."/>
            <person name="Jaffe D.B."/>
            <person name="Lui A."/>
            <person name="Macdonald P."/>
            <person name="Mauceli E."/>
            <person name="Naylor J.W."/>
            <person name="Nesbitt R."/>
            <person name="Nicol R."/>
            <person name="O'Leary S.B."/>
            <person name="Ratcliffe A."/>
            <person name="Rounsley S."/>
            <person name="She X."/>
            <person name="Sneddon K.M.B."/>
            <person name="Stewart S."/>
            <person name="Sougnez C."/>
            <person name="Stone S.M."/>
            <person name="Topham K."/>
            <person name="Vincent D."/>
            <person name="Wang S."/>
            <person name="Zimmer A.R."/>
            <person name="Birren B.W."/>
            <person name="Hood L."/>
            <person name="Lander E.S."/>
            <person name="Nusbaum C."/>
        </authorList>
    </citation>
    <scope>NUCLEOTIDE SEQUENCE [LARGE SCALE GENOMIC DNA]</scope>
</reference>
<reference key="4">
    <citation type="journal article" date="2004" name="Genome Res.">
        <title>The status, quality, and expansion of the NIH full-length cDNA project: the Mammalian Gene Collection (MGC).</title>
        <authorList>
            <consortium name="The MGC Project Team"/>
        </authorList>
    </citation>
    <scope>NUCLEOTIDE SEQUENCE [LARGE SCALE MRNA] (ISOFORM 2)</scope>
    <source>
        <tissue>Placenta</tissue>
    </source>
</reference>
<reference key="5">
    <citation type="journal article" date="1998" name="Hum. Mol. Genet.">
        <title>Huntingtin interacts with a family of WW domain proteins.</title>
        <authorList>
            <person name="Faber P.W."/>
            <person name="Barnes G.T."/>
            <person name="Srinidhi J."/>
            <person name="Chen J."/>
            <person name="Gusella J.F."/>
            <person name="MacDonald M.E."/>
        </authorList>
    </citation>
    <scope>NUCLEOTIDE SEQUENCE [MRNA] OF 2-121 (ISOFORM 2)</scope>
    <scope>POSSIBLE INTERACTION WITH HTT</scope>
    <source>
        <tissue>Testis</tissue>
    </source>
</reference>
<reference key="6">
    <citation type="journal article" date="2008" name="Hum. Mol. Genet.">
        <title>HYPK, a Huntingtin interacting protein, reduces aggregates and apoptosis induced by N-terminal Huntingtin with 40 glutamines in Neuro2a cells and exhibits chaperone-like activity.</title>
        <authorList>
            <person name="Raychaudhuri S."/>
            <person name="Sinha M."/>
            <person name="Mukhopadhyay D."/>
            <person name="Bhattacharyya N.P."/>
        </authorList>
    </citation>
    <scope>FUNCTION</scope>
    <scope>INTERACTION WITH HTT</scope>
    <scope>SUBCELLULAR LOCATION</scope>
</reference>
<reference key="7">
    <citation type="journal article" date="2010" name="Mol. Cell. Biol.">
        <title>The chaperone-like protein HYPK acts together with NatA in cotranslational N-terminal acetylation and prevention of Huntingtin aggregation.</title>
        <authorList>
            <person name="Arnesen T."/>
            <person name="Starheim K.K."/>
            <person name="Van Damme P."/>
            <person name="Evjenth R."/>
            <person name="Dinh H."/>
            <person name="Betts M.J."/>
            <person name="Ryningen A."/>
            <person name="Vandekerckhove J."/>
            <person name="Gevaert K."/>
            <person name="Anderson D."/>
        </authorList>
    </citation>
    <scope>IDENTIFICATION BY MASS SPECTROMETRY</scope>
    <scope>FUNCTION</scope>
    <scope>SUBUNIT</scope>
    <scope>IDENTIFICATION IN THE N-TERMINAL ACETYLTRANSFERASE A/HYPK COMPLEX</scope>
    <scope>INTERACTION WITH NAA15</scope>
    <scope>SUBCELLULAR LOCATION</scope>
</reference>
<reference key="8">
    <citation type="journal article" date="2010" name="Sci. Signal.">
        <title>Quantitative phosphoproteomics reveals widespread full phosphorylation site occupancy during mitosis.</title>
        <authorList>
            <person name="Olsen J.V."/>
            <person name="Vermeulen M."/>
            <person name="Santamaria A."/>
            <person name="Kumar C."/>
            <person name="Miller M.L."/>
            <person name="Jensen L.J."/>
            <person name="Gnad F."/>
            <person name="Cox J."/>
            <person name="Jensen T.S."/>
            <person name="Nigg E.A."/>
            <person name="Brunak S."/>
            <person name="Mann M."/>
        </authorList>
    </citation>
    <scope>PHOSPHORYLATION [LARGE SCALE ANALYSIS] AT SER-30</scope>
    <scope>IDENTIFICATION BY MASS SPECTROMETRY [LARGE SCALE ANALYSIS]</scope>
    <source>
        <tissue>Cervix carcinoma</tissue>
    </source>
</reference>
<reference key="9">
    <citation type="journal article" date="2011" name="BMC Syst. Biol.">
        <title>Initial characterization of the human central proteome.</title>
        <authorList>
            <person name="Burkard T.R."/>
            <person name="Planyavsky M."/>
            <person name="Kaupe I."/>
            <person name="Breitwieser F.P."/>
            <person name="Buerckstuemmer T."/>
            <person name="Bennett K.L."/>
            <person name="Superti-Furga G."/>
            <person name="Colinge J."/>
        </authorList>
    </citation>
    <scope>IDENTIFICATION BY MASS SPECTROMETRY [LARGE SCALE ANALYSIS]</scope>
</reference>
<reference key="10">
    <citation type="journal article" date="2013" name="J. Proteome Res.">
        <title>Toward a comprehensive characterization of a human cancer cell phosphoproteome.</title>
        <authorList>
            <person name="Zhou H."/>
            <person name="Di Palma S."/>
            <person name="Preisinger C."/>
            <person name="Peng M."/>
            <person name="Polat A.N."/>
            <person name="Heck A.J."/>
            <person name="Mohammed S."/>
        </authorList>
    </citation>
    <scope>IDENTIFICATION BY MASS SPECTROMETRY [LARGE SCALE ANALYSIS]</scope>
    <source>
        <tissue>Erythroleukemia</tissue>
    </source>
</reference>
<reference key="11">
    <citation type="journal article" date="2014" name="J. Proteomics">
        <title>An enzyme assisted RP-RPLC approach for in-depth analysis of human liver phosphoproteome.</title>
        <authorList>
            <person name="Bian Y."/>
            <person name="Song C."/>
            <person name="Cheng K."/>
            <person name="Dong M."/>
            <person name="Wang F."/>
            <person name="Huang J."/>
            <person name="Sun D."/>
            <person name="Wang L."/>
            <person name="Ye M."/>
            <person name="Zou H."/>
        </authorList>
    </citation>
    <scope>IDENTIFICATION BY MASS SPECTROMETRY [LARGE SCALE ANALYSIS]</scope>
    <source>
        <tissue>Liver</tissue>
    </source>
</reference>
<reference evidence="11" key="12">
    <citation type="journal article" date="2018" name="Structure">
        <title>Structure of Human NatA and Its Regulation by the Huntingtin Interacting Protein HYPK.</title>
        <authorList>
            <person name="Gottlieb L."/>
            <person name="Marmorstein R."/>
        </authorList>
    </citation>
    <scope>X-RAY CRYSTALLOGRAPHY (3.15 ANGSTROMS) OF 27-121 IN COMPLEX WITH NAA10 AND NAA15</scope>
    <scope>FUNCTION</scope>
    <scope>IDENTIFICATION IN THE N-TERMINAL ACETYLTRANSFERASE A/HYPK COMPLEX</scope>
    <scope>IDENTIFICATION IN THE N-TERMINAL ACETYLTRANSFERASE E/HYPK COMPLEX</scope>
    <scope>INTERACTION WITH NAA10 AND NAA15</scope>
    <scope>MUTAGENESIS OF HIS-28; LEU-35; VAL-38 AND 52-LEU--ASN-121</scope>
</reference>
<reference evidence="11" key="13">
    <citation type="journal article" date="2020" name="Nat. Commun.">
        <title>Molecular basis for N-terminal acetylation by human NatE and its modulation by HYPK.</title>
        <authorList>
            <person name="Deng S."/>
            <person name="McTiernan N."/>
            <person name="Wei X."/>
            <person name="Arnesen T."/>
            <person name="Marmorstein R."/>
        </authorList>
    </citation>
    <scope>STRUCTURE BY ELECTRON MICROSCOPY (4.03 ANGSTROMS)</scope>
    <scope>FUNCTION</scope>
    <scope>IDENTIFICATION IN THE N-TERMINAL ACETYLTRANSFERASE A/HYPK COMPLEX</scope>
    <scope>IDENTIFICATION IN THE N-TERMINAL ACETYLTRANSFERASE E/HYPK COMPLEX</scope>
    <scope>INTERACTION WITH NAA10 AND NAA15</scope>
</reference>
<organism>
    <name type="scientific">Homo sapiens</name>
    <name type="common">Human</name>
    <dbReference type="NCBI Taxonomy" id="9606"/>
    <lineage>
        <taxon>Eukaryota</taxon>
        <taxon>Metazoa</taxon>
        <taxon>Chordata</taxon>
        <taxon>Craniata</taxon>
        <taxon>Vertebrata</taxon>
        <taxon>Euteleostomi</taxon>
        <taxon>Mammalia</taxon>
        <taxon>Eutheria</taxon>
        <taxon>Euarchontoglires</taxon>
        <taxon>Primates</taxon>
        <taxon>Haplorrhini</taxon>
        <taxon>Catarrhini</taxon>
        <taxon>Hominidae</taxon>
        <taxon>Homo</taxon>
    </lineage>
</organism>
<protein>
    <recommendedName>
        <fullName evidence="9">Huntingtin-interacting protein K</fullName>
    </recommendedName>
    <alternativeName>
        <fullName>Huntingtin yeast partner K</fullName>
    </alternativeName>
</protein>
<sequence length="121" mass="13651">MATEGDVELELETETSGPERPPEKPRKHDSGAADLERVTDYAEEKEIQSSNLETAMSVIGDRRSREQKAKQEREKELAKVTIKKEDLELIMTEMEISRAAAERSLREHMGNVVEALIALTN</sequence>
<gene>
    <name evidence="10" type="primary">HYPK</name>
    <name type="synonym">C15orf63</name>
    <name type="ORF">HSPC136</name>
</gene>
<accession>Q9NX55</accession>
<accession>C9JKJ0</accession>
<accession>O75408</accession>
<accession>Q8WUW8</accession>
<accession>Q9P024</accession>
<proteinExistence type="evidence at protein level"/>
<name>HYPK_HUMAN</name>
<feature type="chain" id="PRO_0000274605" description="Huntingtin-interacting protein K">
    <location>
        <begin position="1"/>
        <end position="121"/>
    </location>
</feature>
<feature type="region of interest" description="Disordered" evidence="2">
    <location>
        <begin position="1"/>
        <end position="75"/>
    </location>
</feature>
<feature type="region of interest" description="Required for association with the NAA10-NAA15 complex" evidence="6">
    <location>
        <begin position="52"/>
        <end position="121"/>
    </location>
</feature>
<feature type="coiled-coil region" evidence="1">
    <location>
        <begin position="62"/>
        <end position="107"/>
    </location>
</feature>
<feature type="compositionally biased region" description="Acidic residues" evidence="2">
    <location>
        <begin position="1"/>
        <end position="13"/>
    </location>
</feature>
<feature type="compositionally biased region" description="Basic and acidic residues" evidence="2">
    <location>
        <begin position="20"/>
        <end position="47"/>
    </location>
</feature>
<feature type="compositionally biased region" description="Basic and acidic residues" evidence="2">
    <location>
        <begin position="60"/>
        <end position="75"/>
    </location>
</feature>
<feature type="modified residue" description="Phosphoserine" evidence="12">
    <location>
        <position position="30"/>
    </location>
</feature>
<feature type="splice variant" id="VSP_040677" description="In isoform 3." evidence="8">
    <original>AMSVIGDRRSREQKAKQERE</original>
    <variation>GERTGKSHYQEGRSGANSEW</variation>
    <location>
        <begin position="55"/>
        <end position="74"/>
    </location>
</feature>
<feature type="splice variant" id="VSP_040678" description="In isoform 3." evidence="8">
    <location>
        <begin position="78"/>
        <end position="121"/>
    </location>
</feature>
<feature type="sequence variant" id="VAR_030335" description="In dbSNP:rs12702." evidence="3">
    <original>S</original>
    <variation>P</variation>
    <location>
        <position position="97"/>
    </location>
</feature>
<feature type="mutagenesis site" description="Reduces ability to inhibit NAA10-NAA15 complex-mediated N-terminal acetylation, which results in increased N-terminal acetylation." evidence="6">
    <original>H</original>
    <variation>A</variation>
    <location>
        <position position="28"/>
    </location>
</feature>
<feature type="mutagenesis site" description="Reduces ability to inhibit NAA10-NAA15 complex-mediated N-terminal acetylation, which results in increased N-terminal acetylation; when associated with A-38." evidence="6">
    <original>L</original>
    <variation>A</variation>
    <location>
        <position position="35"/>
    </location>
</feature>
<feature type="mutagenesis site" description="Reduces ability to inhibit NAA10-NAA15 complex-mediated N-terminal acetylation, which results in increased N-terminal acetylation; when associated with A-35." evidence="6">
    <original>V</original>
    <variation>A</variation>
    <location>
        <position position="38"/>
    </location>
</feature>
<feature type="mutagenesis site" description="Abolishes interaction with NAA10 and NAA15." evidence="6">
    <location>
        <begin position="52"/>
        <end position="121"/>
    </location>
</feature>
<feature type="turn" evidence="13">
    <location>
        <begin position="30"/>
        <end position="35"/>
    </location>
</feature>
<feature type="helix" evidence="13">
    <location>
        <begin position="36"/>
        <end position="39"/>
    </location>
</feature>
<feature type="helix" evidence="13">
    <location>
        <begin position="52"/>
        <end position="78"/>
    </location>
</feature>
<feature type="helix" evidence="13">
    <location>
        <begin position="84"/>
        <end position="93"/>
    </location>
</feature>
<feature type="helix" evidence="13">
    <location>
        <begin position="98"/>
        <end position="107"/>
    </location>
</feature>
<feature type="turn" evidence="13">
    <location>
        <begin position="108"/>
        <end position="110"/>
    </location>
</feature>
<feature type="helix" evidence="13">
    <location>
        <begin position="112"/>
        <end position="120"/>
    </location>
</feature>